<accession>Q2NWD7</accession>
<gene>
    <name evidence="1" type="primary">ribB</name>
    <name type="ordered locus">SG0263</name>
</gene>
<feature type="chain" id="PRO_1000040638" description="3,4-dihydroxy-2-butanone 4-phosphate synthase">
    <location>
        <begin position="1"/>
        <end position="217"/>
    </location>
</feature>
<feature type="binding site" evidence="1">
    <location>
        <begin position="37"/>
        <end position="38"/>
    </location>
    <ligand>
        <name>D-ribulose 5-phosphate</name>
        <dbReference type="ChEBI" id="CHEBI:58121"/>
    </ligand>
</feature>
<feature type="binding site" evidence="1">
    <location>
        <position position="38"/>
    </location>
    <ligand>
        <name>Mg(2+)</name>
        <dbReference type="ChEBI" id="CHEBI:18420"/>
        <label>1</label>
    </ligand>
</feature>
<feature type="binding site" evidence="1">
    <location>
        <position position="38"/>
    </location>
    <ligand>
        <name>Mg(2+)</name>
        <dbReference type="ChEBI" id="CHEBI:18420"/>
        <label>2</label>
    </ligand>
</feature>
<feature type="binding site" evidence="1">
    <location>
        <position position="42"/>
    </location>
    <ligand>
        <name>D-ribulose 5-phosphate</name>
        <dbReference type="ChEBI" id="CHEBI:58121"/>
    </ligand>
</feature>
<feature type="binding site" evidence="1">
    <location>
        <begin position="150"/>
        <end position="154"/>
    </location>
    <ligand>
        <name>D-ribulose 5-phosphate</name>
        <dbReference type="ChEBI" id="CHEBI:58121"/>
    </ligand>
</feature>
<feature type="binding site" evidence="1">
    <location>
        <position position="153"/>
    </location>
    <ligand>
        <name>Mg(2+)</name>
        <dbReference type="ChEBI" id="CHEBI:18420"/>
        <label>2</label>
    </ligand>
</feature>
<feature type="binding site" evidence="1">
    <location>
        <position position="174"/>
    </location>
    <ligand>
        <name>D-ribulose 5-phosphate</name>
        <dbReference type="ChEBI" id="CHEBI:58121"/>
    </ligand>
</feature>
<feature type="site" description="Essential for catalytic activity" evidence="1">
    <location>
        <position position="136"/>
    </location>
</feature>
<feature type="site" description="Essential for catalytic activity" evidence="1">
    <location>
        <position position="174"/>
    </location>
</feature>
<proteinExistence type="inferred from homology"/>
<evidence type="ECO:0000255" key="1">
    <source>
        <dbReference type="HAMAP-Rule" id="MF_00180"/>
    </source>
</evidence>
<organism>
    <name type="scientific">Sodalis glossinidius (strain morsitans)</name>
    <dbReference type="NCBI Taxonomy" id="343509"/>
    <lineage>
        <taxon>Bacteria</taxon>
        <taxon>Pseudomonadati</taxon>
        <taxon>Pseudomonadota</taxon>
        <taxon>Gammaproteobacteria</taxon>
        <taxon>Enterobacterales</taxon>
        <taxon>Bruguierivoracaceae</taxon>
        <taxon>Sodalis</taxon>
    </lineage>
</organism>
<keyword id="KW-0456">Lyase</keyword>
<keyword id="KW-0460">Magnesium</keyword>
<keyword id="KW-0464">Manganese</keyword>
<keyword id="KW-0479">Metal-binding</keyword>
<keyword id="KW-0686">Riboflavin biosynthesis</keyword>
<reference key="1">
    <citation type="journal article" date="2006" name="Genome Res.">
        <title>Massive genome erosion and functional adaptations provide insights into the symbiotic lifestyle of Sodalis glossinidius in the tsetse host.</title>
        <authorList>
            <person name="Toh H."/>
            <person name="Weiss B.L."/>
            <person name="Perkin S.A.H."/>
            <person name="Yamashita A."/>
            <person name="Oshima K."/>
            <person name="Hattori M."/>
            <person name="Aksoy S."/>
        </authorList>
    </citation>
    <scope>NUCLEOTIDE SEQUENCE [LARGE SCALE GENOMIC DNA]</scope>
    <source>
        <strain>morsitans</strain>
    </source>
</reference>
<name>RIBB_SODGM</name>
<sequence>MNQTLLSEFGSPSQRVENALESLRNGRGVLVLDDEDRENEGDMIFAAQNMTVEQMALTIRYGSGIVCLCLTEERRQQLALPMMVERNSSHYQTAFTVTIEAAEGVSTGVSAADRLTTIRAAIKDNAKPTDLNRPGHVFPLCAQPGGVLVRGGHTEAAVDLTTLAGLKPAGVLCEVTNDDGSMAHAPEIIAFGRRHNMPVLTIEDLVAYRRALMREVS</sequence>
<dbReference type="EC" id="4.1.99.12" evidence="1"/>
<dbReference type="EMBL" id="AP008232">
    <property type="protein sequence ID" value="BAE73538.1"/>
    <property type="molecule type" value="Genomic_DNA"/>
</dbReference>
<dbReference type="RefSeq" id="WP_011410126.1">
    <property type="nucleotide sequence ID" value="NC_007712.1"/>
</dbReference>
<dbReference type="SMR" id="Q2NWD7"/>
<dbReference type="STRING" id="343509.SG0263"/>
<dbReference type="KEGG" id="sgl:SG0263"/>
<dbReference type="eggNOG" id="COG0108">
    <property type="taxonomic scope" value="Bacteria"/>
</dbReference>
<dbReference type="HOGENOM" id="CLU_020273_3_0_6"/>
<dbReference type="OrthoDB" id="9793111at2"/>
<dbReference type="BioCyc" id="SGLO343509:SGP1_RS02460-MONOMER"/>
<dbReference type="UniPathway" id="UPA00275">
    <property type="reaction ID" value="UER00399"/>
</dbReference>
<dbReference type="Proteomes" id="UP000001932">
    <property type="component" value="Chromosome"/>
</dbReference>
<dbReference type="GO" id="GO:0005829">
    <property type="term" value="C:cytosol"/>
    <property type="evidence" value="ECO:0007669"/>
    <property type="project" value="TreeGrafter"/>
</dbReference>
<dbReference type="GO" id="GO:0008686">
    <property type="term" value="F:3,4-dihydroxy-2-butanone-4-phosphate synthase activity"/>
    <property type="evidence" value="ECO:0007669"/>
    <property type="project" value="UniProtKB-UniRule"/>
</dbReference>
<dbReference type="GO" id="GO:0000287">
    <property type="term" value="F:magnesium ion binding"/>
    <property type="evidence" value="ECO:0007669"/>
    <property type="project" value="UniProtKB-UniRule"/>
</dbReference>
<dbReference type="GO" id="GO:0030145">
    <property type="term" value="F:manganese ion binding"/>
    <property type="evidence" value="ECO:0007669"/>
    <property type="project" value="UniProtKB-UniRule"/>
</dbReference>
<dbReference type="GO" id="GO:0009231">
    <property type="term" value="P:riboflavin biosynthetic process"/>
    <property type="evidence" value="ECO:0007669"/>
    <property type="project" value="UniProtKB-UniRule"/>
</dbReference>
<dbReference type="FunFam" id="3.90.870.10:FF:000002">
    <property type="entry name" value="3,4-dihydroxy-2-butanone 4-phosphate synthase"/>
    <property type="match status" value="1"/>
</dbReference>
<dbReference type="Gene3D" id="3.90.870.10">
    <property type="entry name" value="DHBP synthase"/>
    <property type="match status" value="1"/>
</dbReference>
<dbReference type="HAMAP" id="MF_00180">
    <property type="entry name" value="RibB"/>
    <property type="match status" value="1"/>
</dbReference>
<dbReference type="InterPro" id="IPR017945">
    <property type="entry name" value="DHBP_synth_RibB-like_a/b_dom"/>
</dbReference>
<dbReference type="InterPro" id="IPR000422">
    <property type="entry name" value="DHBP_synthase_RibB"/>
</dbReference>
<dbReference type="NCBIfam" id="TIGR00506">
    <property type="entry name" value="ribB"/>
    <property type="match status" value="1"/>
</dbReference>
<dbReference type="PANTHER" id="PTHR21327:SF38">
    <property type="entry name" value="3,4-DIHYDROXY-2-BUTANONE 4-PHOSPHATE SYNTHASE"/>
    <property type="match status" value="1"/>
</dbReference>
<dbReference type="PANTHER" id="PTHR21327">
    <property type="entry name" value="GTP CYCLOHYDROLASE II-RELATED"/>
    <property type="match status" value="1"/>
</dbReference>
<dbReference type="Pfam" id="PF00926">
    <property type="entry name" value="DHBP_synthase"/>
    <property type="match status" value="1"/>
</dbReference>
<dbReference type="SUPFAM" id="SSF55821">
    <property type="entry name" value="YrdC/RibB"/>
    <property type="match status" value="1"/>
</dbReference>
<comment type="function">
    <text evidence="1">Catalyzes the conversion of D-ribulose 5-phosphate to formate and 3,4-dihydroxy-2-butanone 4-phosphate.</text>
</comment>
<comment type="catalytic activity">
    <reaction evidence="1">
        <text>D-ribulose 5-phosphate = (2S)-2-hydroxy-3-oxobutyl phosphate + formate + H(+)</text>
        <dbReference type="Rhea" id="RHEA:18457"/>
        <dbReference type="ChEBI" id="CHEBI:15378"/>
        <dbReference type="ChEBI" id="CHEBI:15740"/>
        <dbReference type="ChEBI" id="CHEBI:58121"/>
        <dbReference type="ChEBI" id="CHEBI:58830"/>
        <dbReference type="EC" id="4.1.99.12"/>
    </reaction>
</comment>
<comment type="cofactor">
    <cofactor evidence="1">
        <name>Mg(2+)</name>
        <dbReference type="ChEBI" id="CHEBI:18420"/>
    </cofactor>
    <cofactor evidence="1">
        <name>Mn(2+)</name>
        <dbReference type="ChEBI" id="CHEBI:29035"/>
    </cofactor>
    <text evidence="1">Binds 2 divalent metal cations per subunit. Magnesium or manganese.</text>
</comment>
<comment type="pathway">
    <text evidence="1">Cofactor biosynthesis; riboflavin biosynthesis; 2-hydroxy-3-oxobutyl phosphate from D-ribulose 5-phosphate: step 1/1.</text>
</comment>
<comment type="subunit">
    <text evidence="1">Homodimer.</text>
</comment>
<comment type="similarity">
    <text evidence="1">Belongs to the DHBP synthase family.</text>
</comment>
<protein>
    <recommendedName>
        <fullName evidence="1">3,4-dihydroxy-2-butanone 4-phosphate synthase</fullName>
        <shortName evidence="1">DHBP synthase</shortName>
        <ecNumber evidence="1">4.1.99.12</ecNumber>
    </recommendedName>
</protein>